<evidence type="ECO:0000255" key="1">
    <source>
        <dbReference type="HAMAP-Rule" id="MF_03112"/>
    </source>
</evidence>
<organism>
    <name type="scientific">Saccharomyces cerevisiae (strain YJM789)</name>
    <name type="common">Baker's yeast</name>
    <dbReference type="NCBI Taxonomy" id="307796"/>
    <lineage>
        <taxon>Eukaryota</taxon>
        <taxon>Fungi</taxon>
        <taxon>Dikarya</taxon>
        <taxon>Ascomycota</taxon>
        <taxon>Saccharomycotina</taxon>
        <taxon>Saccharomycetes</taxon>
        <taxon>Saccharomycetales</taxon>
        <taxon>Saccharomycetaceae</taxon>
        <taxon>Saccharomyces</taxon>
    </lineage>
</organism>
<name>GET3_YEAS7</name>
<comment type="function">
    <text evidence="1">ATPase required for the post-translational delivery of tail-anchored (TA) proteins to the endoplasmic reticulum. Recognizes and selectively binds the transmembrane domain of TA proteins in the cytosol. This complex then targets to the endoplasmic reticulum by membrane-bound receptors GET1 and GET2, where the tail-anchored protein is released for insertion. This process is regulated by ATP binding and hydrolysis. ATP binding drives the homodimer towards the closed dimer state, facilitating recognition of newly synthesized TA membrane proteins. ATP hydrolysis is required for insertion. Subsequently, the homodimer reverts towards the open dimer state, lowering its affinity for the GET1-GET2 receptor, and returning it to the cytosol to initiate a new round of targeting. Cooperates with the HDEL receptor ERD2 to mediate the ATP-dependent retrieval of resident ER proteins that contain a C-terminal H-D-E-L retention signal from the Golgi to the ER. Involved in low-level resistance to the oxyanions arsenite and arsenate, and in heat tolerance.</text>
</comment>
<comment type="subunit">
    <text evidence="1">Homodimer. Component of the Golgi to ER traffic (GET) complex, which is composed of GET1, GET2 and GET3. Within the complex, GET1 and GET2 form a heterotetramer which is stabilized by phosphatidylinositol binding and which binds to the GET3 homodimer. Interacts with the chloride channel protein GEF1.</text>
</comment>
<comment type="subcellular location">
    <subcellularLocation>
        <location evidence="1">Cytoplasm</location>
    </subcellularLocation>
    <subcellularLocation>
        <location evidence="1">Endoplasmic reticulum</location>
    </subcellularLocation>
    <subcellularLocation>
        <location evidence="1">Golgi apparatus</location>
    </subcellularLocation>
    <text evidence="1">GET1 and GET2 are required for targeting GET3 to the endoplasmic reticulum.</text>
</comment>
<comment type="similarity">
    <text evidence="1">Belongs to the arsA ATPase family.</text>
</comment>
<reference key="1">
    <citation type="journal article" date="2007" name="Proc. Natl. Acad. Sci. U.S.A.">
        <title>Genome sequencing and comparative analysis of Saccharomyces cerevisiae strain YJM789.</title>
        <authorList>
            <person name="Wei W."/>
            <person name="McCusker J.H."/>
            <person name="Hyman R.W."/>
            <person name="Jones T."/>
            <person name="Ning Y."/>
            <person name="Cao Z."/>
            <person name="Gu Z."/>
            <person name="Bruno D."/>
            <person name="Miranda M."/>
            <person name="Nguyen M."/>
            <person name="Wilhelmy J."/>
            <person name="Komp C."/>
            <person name="Tamse R."/>
            <person name="Wang X."/>
            <person name="Jia P."/>
            <person name="Luedi P."/>
            <person name="Oefner P.J."/>
            <person name="David L."/>
            <person name="Dietrich F.S."/>
            <person name="Li Y."/>
            <person name="Davis R.W."/>
            <person name="Steinmetz L.M."/>
        </authorList>
    </citation>
    <scope>NUCLEOTIDE SEQUENCE [LARGE SCALE GENOMIC DNA]</scope>
    <source>
        <strain>YJM789</strain>
    </source>
</reference>
<protein>
    <recommendedName>
        <fullName evidence="1">ATPase GET3</fullName>
        <ecNumber evidence="1">3.6.-.-</ecNumber>
    </recommendedName>
    <alternativeName>
        <fullName evidence="1">Arsenical pump-driving ATPase</fullName>
    </alternativeName>
    <alternativeName>
        <fullName evidence="1">Arsenite-stimulated ATPase</fullName>
    </alternativeName>
    <alternativeName>
        <fullName evidence="1">Golgi to ER traffic protein 3</fullName>
    </alternativeName>
    <alternativeName>
        <fullName evidence="1">Guided entry of tail-anchored proteins 3</fullName>
    </alternativeName>
</protein>
<accession>A6ZXM9</accession>
<sequence length="354" mass="39354">MDLTVEPNLHSLITSTTHKWIFVGGKGGVGKTTSSCSIAIQMALSQPNKQFLLISTDPAHNLSDAFGEKFGKDARKVTGMNNLSCMEIDPSAALKDMNDMAVSRANNNGSDGQGDDLGSLLQGGALADLTGSIPGIDEALSFMEVMKHIKRQEQGEGETFDTVIFDTAPTGHTLRFLQLPNTLSKLLEKFGEITNKLGPMLNSFMGAGNVDISGKLNELKANVETIRQQFTDPDLTTFVCVCISEFLSLYETERLIQELISYDMDVNSIIVNQLLFAENDQEHNCKRCQARWKMQKKYLDQIDELYEDFHVVKMPLCAGEIRGLNNLTKFSQFLNKEYNPITDGKVIYELEDKE</sequence>
<dbReference type="EC" id="3.6.-.-" evidence="1"/>
<dbReference type="EMBL" id="AAFW02000145">
    <property type="protein sequence ID" value="EDN60259.1"/>
    <property type="molecule type" value="Genomic_DNA"/>
</dbReference>
<dbReference type="SMR" id="A6ZXM9"/>
<dbReference type="HOGENOM" id="CLU_040761_0_0_1"/>
<dbReference type="Proteomes" id="UP000007060">
    <property type="component" value="Unassembled WGS sequence"/>
</dbReference>
<dbReference type="GO" id="GO:0043529">
    <property type="term" value="C:GET complex"/>
    <property type="evidence" value="ECO:0007669"/>
    <property type="project" value="UniProtKB-UniRule"/>
</dbReference>
<dbReference type="GO" id="GO:0005794">
    <property type="term" value="C:Golgi apparatus"/>
    <property type="evidence" value="ECO:0007669"/>
    <property type="project" value="UniProtKB-SubCell"/>
</dbReference>
<dbReference type="GO" id="GO:0005524">
    <property type="term" value="F:ATP binding"/>
    <property type="evidence" value="ECO:0007669"/>
    <property type="project" value="UniProtKB-UniRule"/>
</dbReference>
<dbReference type="GO" id="GO:0016887">
    <property type="term" value="F:ATP hydrolysis activity"/>
    <property type="evidence" value="ECO:0007669"/>
    <property type="project" value="InterPro"/>
</dbReference>
<dbReference type="GO" id="GO:0046872">
    <property type="term" value="F:metal ion binding"/>
    <property type="evidence" value="ECO:0007669"/>
    <property type="project" value="UniProtKB-KW"/>
</dbReference>
<dbReference type="GO" id="GO:0046685">
    <property type="term" value="P:response to arsenic-containing substance"/>
    <property type="evidence" value="ECO:0007669"/>
    <property type="project" value="UniProtKB-KW"/>
</dbReference>
<dbReference type="GO" id="GO:0071816">
    <property type="term" value="P:tail-anchored membrane protein insertion into ER membrane"/>
    <property type="evidence" value="ECO:0007669"/>
    <property type="project" value="TreeGrafter"/>
</dbReference>
<dbReference type="GO" id="GO:0016192">
    <property type="term" value="P:vesicle-mediated transport"/>
    <property type="evidence" value="ECO:0007669"/>
    <property type="project" value="UniProtKB-KW"/>
</dbReference>
<dbReference type="CDD" id="cd02035">
    <property type="entry name" value="ArsA"/>
    <property type="match status" value="1"/>
</dbReference>
<dbReference type="FunFam" id="3.40.50.300:FF:001359">
    <property type="entry name" value="ATPase GET3"/>
    <property type="match status" value="1"/>
</dbReference>
<dbReference type="Gene3D" id="3.40.50.300">
    <property type="entry name" value="P-loop containing nucleotide triphosphate hydrolases"/>
    <property type="match status" value="1"/>
</dbReference>
<dbReference type="HAMAP" id="MF_03112">
    <property type="entry name" value="Asna1_Get3"/>
    <property type="match status" value="1"/>
</dbReference>
<dbReference type="InterPro" id="IPR025723">
    <property type="entry name" value="Anion-transp_ATPase-like_dom"/>
</dbReference>
<dbReference type="InterPro" id="IPR016300">
    <property type="entry name" value="ATPase_ArsA/GET3"/>
</dbReference>
<dbReference type="InterPro" id="IPR027542">
    <property type="entry name" value="ATPase_ArsA/GET3_euk"/>
</dbReference>
<dbReference type="InterPro" id="IPR027417">
    <property type="entry name" value="P-loop_NTPase"/>
</dbReference>
<dbReference type="NCBIfam" id="TIGR00345">
    <property type="entry name" value="GET3_arsA_TRC40"/>
    <property type="match status" value="1"/>
</dbReference>
<dbReference type="PANTHER" id="PTHR10803">
    <property type="entry name" value="ARSENICAL PUMP-DRIVING ATPASE ARSENITE-TRANSLOCATING ATPASE"/>
    <property type="match status" value="1"/>
</dbReference>
<dbReference type="PANTHER" id="PTHR10803:SF3">
    <property type="entry name" value="ATPASE GET3"/>
    <property type="match status" value="1"/>
</dbReference>
<dbReference type="Pfam" id="PF02374">
    <property type="entry name" value="ArsA_ATPase"/>
    <property type="match status" value="1"/>
</dbReference>
<dbReference type="SUPFAM" id="SSF52540">
    <property type="entry name" value="P-loop containing nucleoside triphosphate hydrolases"/>
    <property type="match status" value="1"/>
</dbReference>
<proteinExistence type="inferred from homology"/>
<keyword id="KW-0059">Arsenical resistance</keyword>
<keyword id="KW-0067">ATP-binding</keyword>
<keyword id="KW-0963">Cytoplasm</keyword>
<keyword id="KW-0256">Endoplasmic reticulum</keyword>
<keyword id="KW-0931">ER-Golgi transport</keyword>
<keyword id="KW-0333">Golgi apparatus</keyword>
<keyword id="KW-0378">Hydrolase</keyword>
<keyword id="KW-0479">Metal-binding</keyword>
<keyword id="KW-0547">Nucleotide-binding</keyword>
<keyword id="KW-0813">Transport</keyword>
<keyword id="KW-0862">Zinc</keyword>
<gene>
    <name evidence="1" type="primary">GET3</name>
    <name type="ORF">SCY_0817</name>
</gene>
<feature type="chain" id="PRO_0000388230" description="ATPase GET3">
    <location>
        <begin position="1"/>
        <end position="354"/>
    </location>
</feature>
<feature type="active site" evidence="1">
    <location>
        <position position="57"/>
    </location>
</feature>
<feature type="binding site" evidence="1">
    <location>
        <begin position="26"/>
        <end position="33"/>
    </location>
    <ligand>
        <name>ATP</name>
        <dbReference type="ChEBI" id="CHEBI:30616"/>
    </ligand>
</feature>
<feature type="binding site" evidence="1">
    <location>
        <position position="245"/>
    </location>
    <ligand>
        <name>ATP</name>
        <dbReference type="ChEBI" id="CHEBI:30616"/>
    </ligand>
</feature>
<feature type="binding site" evidence="1">
    <location>
        <position position="272"/>
    </location>
    <ligand>
        <name>ATP</name>
        <dbReference type="ChEBI" id="CHEBI:30616"/>
    </ligand>
</feature>
<feature type="binding site" evidence="1">
    <location>
        <position position="285"/>
    </location>
    <ligand>
        <name>Zn(2+)</name>
        <dbReference type="ChEBI" id="CHEBI:29105"/>
        <note>ligand shared between dimeric partners</note>
    </ligand>
</feature>
<feature type="binding site" evidence="1">
    <location>
        <position position="288"/>
    </location>
    <ligand>
        <name>Zn(2+)</name>
        <dbReference type="ChEBI" id="CHEBI:29105"/>
        <note>ligand shared between dimeric partners</note>
    </ligand>
</feature>